<keyword id="KW-0067">ATP-binding</keyword>
<keyword id="KW-0436">Ligase</keyword>
<keyword id="KW-0547">Nucleotide-binding</keyword>
<keyword id="KW-0658">Purine biosynthesis</keyword>
<organism>
    <name type="scientific">Mycobacterium sp. (strain JLS)</name>
    <dbReference type="NCBI Taxonomy" id="164757"/>
    <lineage>
        <taxon>Bacteria</taxon>
        <taxon>Bacillati</taxon>
        <taxon>Actinomycetota</taxon>
        <taxon>Actinomycetes</taxon>
        <taxon>Mycobacteriales</taxon>
        <taxon>Mycobacteriaceae</taxon>
        <taxon>Mycobacterium</taxon>
    </lineage>
</organism>
<protein>
    <recommendedName>
        <fullName evidence="1">Phosphoribosylaminoimidazole-succinocarboxamide synthase</fullName>
        <ecNumber evidence="1">6.3.2.6</ecNumber>
    </recommendedName>
    <alternativeName>
        <fullName evidence="1">SAICAR synthetase</fullName>
    </alternativeName>
</protein>
<gene>
    <name evidence="1" type="primary">purC</name>
    <name type="ordered locus">Mjls_4943</name>
</gene>
<proteinExistence type="inferred from homology"/>
<dbReference type="EC" id="6.3.2.6" evidence="1"/>
<dbReference type="EMBL" id="CP000580">
    <property type="protein sequence ID" value="ABO00709.1"/>
    <property type="molecule type" value="Genomic_DNA"/>
</dbReference>
<dbReference type="SMR" id="A3Q6D1"/>
<dbReference type="KEGG" id="mjl:Mjls_4943"/>
<dbReference type="HOGENOM" id="CLU_045637_0_0_11"/>
<dbReference type="BioCyc" id="MSP164757:G1G8C-4993-MONOMER"/>
<dbReference type="UniPathway" id="UPA00074">
    <property type="reaction ID" value="UER00131"/>
</dbReference>
<dbReference type="GO" id="GO:0005737">
    <property type="term" value="C:cytoplasm"/>
    <property type="evidence" value="ECO:0007669"/>
    <property type="project" value="TreeGrafter"/>
</dbReference>
<dbReference type="GO" id="GO:0005524">
    <property type="term" value="F:ATP binding"/>
    <property type="evidence" value="ECO:0007669"/>
    <property type="project" value="UniProtKB-KW"/>
</dbReference>
<dbReference type="GO" id="GO:0004639">
    <property type="term" value="F:phosphoribosylaminoimidazolesuccinocarboxamide synthase activity"/>
    <property type="evidence" value="ECO:0007669"/>
    <property type="project" value="UniProtKB-UniRule"/>
</dbReference>
<dbReference type="GO" id="GO:0006189">
    <property type="term" value="P:'de novo' IMP biosynthetic process"/>
    <property type="evidence" value="ECO:0007669"/>
    <property type="project" value="UniProtKB-UniRule"/>
</dbReference>
<dbReference type="CDD" id="cd01414">
    <property type="entry name" value="SAICAR_synt_Sc"/>
    <property type="match status" value="1"/>
</dbReference>
<dbReference type="FunFam" id="3.30.200.20:FF:000199">
    <property type="entry name" value="Phosphoribosylaminoimidazole-succinocarboxamide synthase"/>
    <property type="match status" value="1"/>
</dbReference>
<dbReference type="FunFam" id="3.30.470.20:FF:000015">
    <property type="entry name" value="Phosphoribosylaminoimidazole-succinocarboxamide synthase"/>
    <property type="match status" value="1"/>
</dbReference>
<dbReference type="Gene3D" id="3.30.470.20">
    <property type="entry name" value="ATP-grasp fold, B domain"/>
    <property type="match status" value="1"/>
</dbReference>
<dbReference type="Gene3D" id="3.30.200.20">
    <property type="entry name" value="Phosphorylase Kinase, domain 1"/>
    <property type="match status" value="1"/>
</dbReference>
<dbReference type="HAMAP" id="MF_00137">
    <property type="entry name" value="SAICAR_synth"/>
    <property type="match status" value="1"/>
</dbReference>
<dbReference type="InterPro" id="IPR028923">
    <property type="entry name" value="SAICAR_synt/ADE2_N"/>
</dbReference>
<dbReference type="InterPro" id="IPR001636">
    <property type="entry name" value="SAICAR_synth"/>
</dbReference>
<dbReference type="InterPro" id="IPR018236">
    <property type="entry name" value="SAICAR_synthetase_CS"/>
</dbReference>
<dbReference type="NCBIfam" id="NF010568">
    <property type="entry name" value="PRK13961.1"/>
    <property type="match status" value="1"/>
</dbReference>
<dbReference type="NCBIfam" id="TIGR00081">
    <property type="entry name" value="purC"/>
    <property type="match status" value="1"/>
</dbReference>
<dbReference type="PANTHER" id="PTHR43700">
    <property type="entry name" value="PHOSPHORIBOSYLAMINOIMIDAZOLE-SUCCINOCARBOXAMIDE SYNTHASE"/>
    <property type="match status" value="1"/>
</dbReference>
<dbReference type="PANTHER" id="PTHR43700:SF1">
    <property type="entry name" value="PHOSPHORIBOSYLAMINOIMIDAZOLE-SUCCINOCARBOXAMIDE SYNTHASE"/>
    <property type="match status" value="1"/>
</dbReference>
<dbReference type="Pfam" id="PF01259">
    <property type="entry name" value="SAICAR_synt"/>
    <property type="match status" value="1"/>
</dbReference>
<dbReference type="SUPFAM" id="SSF56104">
    <property type="entry name" value="SAICAR synthase-like"/>
    <property type="match status" value="1"/>
</dbReference>
<dbReference type="PROSITE" id="PS01057">
    <property type="entry name" value="SAICAR_SYNTHETASE_1"/>
    <property type="match status" value="1"/>
</dbReference>
<dbReference type="PROSITE" id="PS01058">
    <property type="entry name" value="SAICAR_SYNTHETASE_2"/>
    <property type="match status" value="1"/>
</dbReference>
<comment type="catalytic activity">
    <reaction evidence="1">
        <text>5-amino-1-(5-phospho-D-ribosyl)imidazole-4-carboxylate + L-aspartate + ATP = (2S)-2-[5-amino-1-(5-phospho-beta-D-ribosyl)imidazole-4-carboxamido]succinate + ADP + phosphate + 2 H(+)</text>
        <dbReference type="Rhea" id="RHEA:22628"/>
        <dbReference type="ChEBI" id="CHEBI:15378"/>
        <dbReference type="ChEBI" id="CHEBI:29991"/>
        <dbReference type="ChEBI" id="CHEBI:30616"/>
        <dbReference type="ChEBI" id="CHEBI:43474"/>
        <dbReference type="ChEBI" id="CHEBI:58443"/>
        <dbReference type="ChEBI" id="CHEBI:77657"/>
        <dbReference type="ChEBI" id="CHEBI:456216"/>
        <dbReference type="EC" id="6.3.2.6"/>
    </reaction>
</comment>
<comment type="pathway">
    <text evidence="1">Purine metabolism; IMP biosynthesis via de novo pathway; 5-amino-1-(5-phospho-D-ribosyl)imidazole-4-carboxamide from 5-amino-1-(5-phospho-D-ribosyl)imidazole-4-carboxylate: step 1/2.</text>
</comment>
<comment type="similarity">
    <text evidence="1">Belongs to the SAICAR synthetase family.</text>
</comment>
<evidence type="ECO:0000255" key="1">
    <source>
        <dbReference type="HAMAP-Rule" id="MF_00137"/>
    </source>
</evidence>
<feature type="chain" id="PRO_1000018736" description="Phosphoribosylaminoimidazole-succinocarboxamide synthase">
    <location>
        <begin position="1"/>
        <end position="297"/>
    </location>
</feature>
<name>PUR7_MYCSJ</name>
<reference key="1">
    <citation type="submission" date="2007-02" db="EMBL/GenBank/DDBJ databases">
        <title>Complete sequence of Mycobacterium sp. JLS.</title>
        <authorList>
            <consortium name="US DOE Joint Genome Institute"/>
            <person name="Copeland A."/>
            <person name="Lucas S."/>
            <person name="Lapidus A."/>
            <person name="Barry K."/>
            <person name="Detter J.C."/>
            <person name="Glavina del Rio T."/>
            <person name="Hammon N."/>
            <person name="Israni S."/>
            <person name="Dalin E."/>
            <person name="Tice H."/>
            <person name="Pitluck S."/>
            <person name="Chain P."/>
            <person name="Malfatti S."/>
            <person name="Shin M."/>
            <person name="Vergez L."/>
            <person name="Schmutz J."/>
            <person name="Larimer F."/>
            <person name="Land M."/>
            <person name="Hauser L."/>
            <person name="Kyrpides N."/>
            <person name="Mikhailova N."/>
            <person name="Miller C.D."/>
            <person name="Anderson A.J."/>
            <person name="Sims R.C."/>
            <person name="Richardson P."/>
        </authorList>
    </citation>
    <scope>NUCLEOTIDE SEQUENCE [LARGE SCALE GENOMIC DNA]</scope>
    <source>
        <strain>JLS</strain>
    </source>
</reference>
<accession>A3Q6D1</accession>
<sequence>MRPALSDYRHLASGKVRELYRIDDEHLLFVATDRISAYDHILSSEIPDKGRILTAMSVFFFDLIDAPNHLAGPPDDPRIPEEVLGRALVVRQLEMLPVECVARGYLTGSGLIDYRKTGTLCGLTLPPGLTEASKFAEPLYTPASKAELGLHDENIDFAATVDLVGEKRAAQLRERTLQIYTQGADHALTKGIIIADTKFEFGVDQSGELVLADEVFTPDSSRYWYADAYREGQVQPSYDKQFVRNWLTGPESGWDRAADQPPPPLPAEIVDATRSRYIEAYERISGLSFAEWIGASA</sequence>